<evidence type="ECO:0000250" key="1"/>
<evidence type="ECO:0000250" key="2">
    <source>
        <dbReference type="UniProtKB" id="P32485"/>
    </source>
</evidence>
<evidence type="ECO:0000250" key="3">
    <source>
        <dbReference type="UniProtKB" id="Q16539"/>
    </source>
</evidence>
<evidence type="ECO:0000255" key="4">
    <source>
        <dbReference type="PROSITE-ProRule" id="PRU00159"/>
    </source>
</evidence>
<evidence type="ECO:0000255" key="5">
    <source>
        <dbReference type="PROSITE-ProRule" id="PRU10027"/>
    </source>
</evidence>
<evidence type="ECO:0000269" key="6">
    <source>
    </source>
</evidence>
<proteinExistence type="evidence at protein level"/>
<protein>
    <recommendedName>
        <fullName>Mitogen-activated protein kinase hog1</fullName>
        <shortName>MAP kinase hog1</shortName>
        <ecNumber evidence="2">2.7.11.24</ecNumber>
    </recommendedName>
    <alternativeName>
        <fullName>Osmotic stress MAP kinase</fullName>
    </alternativeName>
    <alternativeName>
        <fullName>ThHog1</fullName>
    </alternativeName>
</protein>
<organism>
    <name type="scientific">Trichoderma harzianum</name>
    <name type="common">Hypocrea lixii</name>
    <dbReference type="NCBI Taxonomy" id="5544"/>
    <lineage>
        <taxon>Eukaryota</taxon>
        <taxon>Fungi</taxon>
        <taxon>Dikarya</taxon>
        <taxon>Ascomycota</taxon>
        <taxon>Pezizomycotina</taxon>
        <taxon>Sordariomycetes</taxon>
        <taxon>Hypocreomycetidae</taxon>
        <taxon>Hypocreales</taxon>
        <taxon>Hypocreaceae</taxon>
        <taxon>Trichoderma</taxon>
    </lineage>
</organism>
<comment type="function">
    <text evidence="6">Proline-directed serine/threonine-protein kinase involved in a signal transduction pathway that is activated by changes in the osmolarity of the extracellular environment. Controls osmotic regulation of transcription of target genes.</text>
</comment>
<comment type="catalytic activity">
    <reaction evidence="2">
        <text>L-seryl-[protein] + ATP = O-phospho-L-seryl-[protein] + ADP + H(+)</text>
        <dbReference type="Rhea" id="RHEA:17989"/>
        <dbReference type="Rhea" id="RHEA-COMP:9863"/>
        <dbReference type="Rhea" id="RHEA-COMP:11604"/>
        <dbReference type="ChEBI" id="CHEBI:15378"/>
        <dbReference type="ChEBI" id="CHEBI:29999"/>
        <dbReference type="ChEBI" id="CHEBI:30616"/>
        <dbReference type="ChEBI" id="CHEBI:83421"/>
        <dbReference type="ChEBI" id="CHEBI:456216"/>
        <dbReference type="EC" id="2.7.11.24"/>
    </reaction>
    <physiologicalReaction direction="left-to-right" evidence="2">
        <dbReference type="Rhea" id="RHEA:17990"/>
    </physiologicalReaction>
</comment>
<comment type="catalytic activity">
    <reaction evidence="2">
        <text>L-threonyl-[protein] + ATP = O-phospho-L-threonyl-[protein] + ADP + H(+)</text>
        <dbReference type="Rhea" id="RHEA:46608"/>
        <dbReference type="Rhea" id="RHEA-COMP:11060"/>
        <dbReference type="Rhea" id="RHEA-COMP:11605"/>
        <dbReference type="ChEBI" id="CHEBI:15378"/>
        <dbReference type="ChEBI" id="CHEBI:30013"/>
        <dbReference type="ChEBI" id="CHEBI:30616"/>
        <dbReference type="ChEBI" id="CHEBI:61977"/>
        <dbReference type="ChEBI" id="CHEBI:456216"/>
        <dbReference type="EC" id="2.7.11.24"/>
    </reaction>
    <physiologicalReaction direction="left-to-right" evidence="2">
        <dbReference type="Rhea" id="RHEA:46609"/>
    </physiologicalReaction>
</comment>
<comment type="cofactor">
    <cofactor evidence="3">
        <name>Mg(2+)</name>
        <dbReference type="ChEBI" id="CHEBI:18420"/>
    </cofactor>
</comment>
<comment type="activity regulation">
    <text evidence="1">Activated by tyrosine and threonine phosphorylation.</text>
</comment>
<comment type="subcellular location">
    <subcellularLocation>
        <location evidence="6">Cytoplasm</location>
    </subcellularLocation>
    <subcellularLocation>
        <location evidence="6">Nucleus</location>
    </subcellularLocation>
    <text>Concentrates within the nucleus in response to hyperosmotic conditions and phosphorylation.</text>
</comment>
<comment type="domain">
    <text>The TXY motif contains the threonine and tyrosine residues whose phosphorylation activates the MAP kinases.</text>
</comment>
<comment type="PTM">
    <text evidence="1 6">Dually phosphorylated on Thr-171 and Tyr-173, which activates the enzyme (By similarity). Phosphorylated after osmotic stress.</text>
</comment>
<comment type="similarity">
    <text evidence="4">Belongs to the protein kinase superfamily. Ser/Thr protein kinase family. MAP kinase subfamily. HOG1 sub-subfamily.</text>
</comment>
<gene>
    <name type="primary">hog1</name>
    <name type="synonym">osm1</name>
</gene>
<sequence length="356" mass="41105">MAEFVRAQIFGTTFEITSRYSDLQPVGMGAFGLVCSARDQLTNQNVAVKKIMKPFSTPVLAKRTYRELKLLKHLRHENVISLSDIFISPLEDIYFVTELLGTDLHRLLTSRPLEKQFIQYFLYQIMRGLKYVHSAGVVHRDLKPSNILVNENCDLKICDFGLARIQDPQMTGYVSTRYYRAPEIMLTWQKYDVEVDIWSAGCIFAEMLEGKPLFPGKDHVNQFSIITELLGTPPDDVINTIASENTLRFVKSLPKRERQPLRNKFKNADDSAIDLLERMLVFDPKKRVTATQALAHEYLQPYHDPTDEPVADEKFDWSFNDADLPVDTWKIMMYSEILDYHNVEGAPNMEEQFPPQ</sequence>
<keyword id="KW-0010">Activator</keyword>
<keyword id="KW-0067">ATP-binding</keyword>
<keyword id="KW-0963">Cytoplasm</keyword>
<keyword id="KW-0418">Kinase</keyword>
<keyword id="KW-0547">Nucleotide-binding</keyword>
<keyword id="KW-0539">Nucleus</keyword>
<keyword id="KW-0597">Phosphoprotein</keyword>
<keyword id="KW-0723">Serine/threonine-protein kinase</keyword>
<keyword id="KW-0804">Transcription</keyword>
<keyword id="KW-0805">Transcription regulation</keyword>
<keyword id="KW-0808">Transferase</keyword>
<name>HOG1_TRIHA</name>
<accession>Q2WGK3</accession>
<accession>Q4PKS1</accession>
<reference key="1">
    <citation type="submission" date="2004-11" db="EMBL/GenBank/DDBJ databases">
        <title>Functional analysis of three MAP kinases of Trichoderma harzianum.</title>
        <authorList>
            <person name="Motoyama T."/>
            <person name="Ono D."/>
            <person name="Mukouzaka Y."/>
            <person name="Kawai Y."/>
            <person name="Kudo T."/>
        </authorList>
    </citation>
    <scope>NUCLEOTIDE SEQUENCE [GENOMIC DNA]</scope>
</reference>
<reference key="2">
    <citation type="journal article" date="2005" name="Acta Phytopathol. Entomol. Hung.">
        <title>Identification of new molecular hallmarks for YSAPK MAPKs: application for cloning strategies in different fungal filamentous species.</title>
        <authorList>
            <person name="Adam A.L."/>
            <person name="Kohut G."/>
            <person name="Laday M."/>
        </authorList>
    </citation>
    <scope>NUCLEOTIDE SEQUENCE [GENOMIC DNA] OF 46-253</scope>
    <source>
        <strain>G-1</strain>
    </source>
</reference>
<reference key="3">
    <citation type="journal article" date="2006" name="Microbiology">
        <title>ThHog1 controls the hyperosmotic stress response in Trichoderma harzianum.</title>
        <authorList>
            <person name="Delgado-Jarana J."/>
            <person name="Sousa S."/>
            <person name="Gonzalez F."/>
            <person name="Rey M."/>
            <person name="Llobell A."/>
        </authorList>
    </citation>
    <scope>FUNCTION</scope>
    <scope>SUBCELLULAR LOCATION</scope>
    <scope>PHOSPHORYLATION</scope>
    <scope>MUTAGENESIS OF PHE-315</scope>
</reference>
<dbReference type="EC" id="2.7.11.24" evidence="2"/>
<dbReference type="EMBL" id="AB195837">
    <property type="protein sequence ID" value="BAE53434.1"/>
    <property type="molecule type" value="Genomic_DNA"/>
</dbReference>
<dbReference type="EMBL" id="DQ071423">
    <property type="protein sequence ID" value="AAY82585.1"/>
    <property type="molecule type" value="Genomic_DNA"/>
</dbReference>
<dbReference type="SMR" id="Q2WGK3"/>
<dbReference type="GO" id="GO:0005737">
    <property type="term" value="C:cytoplasm"/>
    <property type="evidence" value="ECO:0007669"/>
    <property type="project" value="UniProtKB-SubCell"/>
</dbReference>
<dbReference type="GO" id="GO:0005634">
    <property type="term" value="C:nucleus"/>
    <property type="evidence" value="ECO:0007669"/>
    <property type="project" value="UniProtKB-SubCell"/>
</dbReference>
<dbReference type="GO" id="GO:0005524">
    <property type="term" value="F:ATP binding"/>
    <property type="evidence" value="ECO:0007669"/>
    <property type="project" value="UniProtKB-KW"/>
</dbReference>
<dbReference type="GO" id="GO:0004707">
    <property type="term" value="F:MAP kinase activity"/>
    <property type="evidence" value="ECO:0007669"/>
    <property type="project" value="UniProtKB-EC"/>
</dbReference>
<dbReference type="GO" id="GO:0106310">
    <property type="term" value="F:protein serine kinase activity"/>
    <property type="evidence" value="ECO:0007669"/>
    <property type="project" value="RHEA"/>
</dbReference>
<dbReference type="GO" id="GO:0051403">
    <property type="term" value="P:stress-activated MAPK cascade"/>
    <property type="evidence" value="ECO:0007669"/>
    <property type="project" value="InterPro"/>
</dbReference>
<dbReference type="CDD" id="cd07856">
    <property type="entry name" value="STKc_Sty1_Hog1"/>
    <property type="match status" value="1"/>
</dbReference>
<dbReference type="FunFam" id="1.10.510.10:FF:000049">
    <property type="entry name" value="Mitogen-activated protein kinase"/>
    <property type="match status" value="1"/>
</dbReference>
<dbReference type="FunFam" id="3.30.200.20:FF:000050">
    <property type="entry name" value="Mitogen-activated protein kinase"/>
    <property type="match status" value="1"/>
</dbReference>
<dbReference type="Gene3D" id="3.30.200.20">
    <property type="entry name" value="Phosphorylase Kinase, domain 1"/>
    <property type="match status" value="1"/>
</dbReference>
<dbReference type="Gene3D" id="1.10.510.10">
    <property type="entry name" value="Transferase(Phosphotransferase) domain 1"/>
    <property type="match status" value="1"/>
</dbReference>
<dbReference type="InterPro" id="IPR011009">
    <property type="entry name" value="Kinase-like_dom_sf"/>
</dbReference>
<dbReference type="InterPro" id="IPR050117">
    <property type="entry name" value="MAP_kinase"/>
</dbReference>
<dbReference type="InterPro" id="IPR003527">
    <property type="entry name" value="MAP_kinase_CS"/>
</dbReference>
<dbReference type="InterPro" id="IPR038783">
    <property type="entry name" value="MAPK_Sty1/Hog1"/>
</dbReference>
<dbReference type="InterPro" id="IPR000719">
    <property type="entry name" value="Prot_kinase_dom"/>
</dbReference>
<dbReference type="InterPro" id="IPR017441">
    <property type="entry name" value="Protein_kinase_ATP_BS"/>
</dbReference>
<dbReference type="InterPro" id="IPR008271">
    <property type="entry name" value="Ser/Thr_kinase_AS"/>
</dbReference>
<dbReference type="PANTHER" id="PTHR24055">
    <property type="entry name" value="MITOGEN-ACTIVATED PROTEIN KINASE"/>
    <property type="match status" value="1"/>
</dbReference>
<dbReference type="Pfam" id="PF00069">
    <property type="entry name" value="Pkinase"/>
    <property type="match status" value="1"/>
</dbReference>
<dbReference type="SMART" id="SM00220">
    <property type="entry name" value="S_TKc"/>
    <property type="match status" value="1"/>
</dbReference>
<dbReference type="SUPFAM" id="SSF56112">
    <property type="entry name" value="Protein kinase-like (PK-like)"/>
    <property type="match status" value="1"/>
</dbReference>
<dbReference type="PROSITE" id="PS01351">
    <property type="entry name" value="MAPK"/>
    <property type="match status" value="1"/>
</dbReference>
<dbReference type="PROSITE" id="PS00107">
    <property type="entry name" value="PROTEIN_KINASE_ATP"/>
    <property type="match status" value="1"/>
</dbReference>
<dbReference type="PROSITE" id="PS50011">
    <property type="entry name" value="PROTEIN_KINASE_DOM"/>
    <property type="match status" value="1"/>
</dbReference>
<dbReference type="PROSITE" id="PS00108">
    <property type="entry name" value="PROTEIN_KINASE_ST"/>
    <property type="match status" value="1"/>
</dbReference>
<feature type="chain" id="PRO_0000289704" description="Mitogen-activated protein kinase hog1">
    <location>
        <begin position="1"/>
        <end position="356"/>
    </location>
</feature>
<feature type="domain" description="Protein kinase" evidence="4">
    <location>
        <begin position="20"/>
        <end position="299"/>
    </location>
</feature>
<feature type="short sequence motif" description="TXY">
    <location>
        <begin position="171"/>
        <end position="173"/>
    </location>
</feature>
<feature type="active site" description="Proton acceptor" evidence="4 5">
    <location>
        <position position="141"/>
    </location>
</feature>
<feature type="binding site" evidence="4">
    <location>
        <begin position="26"/>
        <end position="34"/>
    </location>
    <ligand>
        <name>ATP</name>
        <dbReference type="ChEBI" id="CHEBI:30616"/>
    </ligand>
</feature>
<feature type="binding site" evidence="4">
    <location>
        <position position="49"/>
    </location>
    <ligand>
        <name>ATP</name>
        <dbReference type="ChEBI" id="CHEBI:30616"/>
    </ligand>
</feature>
<feature type="modified residue" description="Phosphothreonine" evidence="1">
    <location>
        <position position="171"/>
    </location>
</feature>
<feature type="modified residue" description="Phosphotyrosine" evidence="1">
    <location>
        <position position="173"/>
    </location>
</feature>
<feature type="mutagenesis site" description="Activates HOG1 in a constitutive manner." evidence="6">
    <original>F</original>
    <variation>S</variation>
    <location>
        <position position="315"/>
    </location>
</feature>